<keyword id="KW-0223">Dioxygenase</keyword>
<keyword id="KW-0408">Iron</keyword>
<keyword id="KW-0479">Metal-binding</keyword>
<keyword id="KW-0560">Oxidoreductase</keyword>
<keyword id="KW-0585">Phenylalanine catabolism</keyword>
<keyword id="KW-1185">Reference proteome</keyword>
<keyword id="KW-0828">Tyrosine catabolism</keyword>
<reference key="1">
    <citation type="journal article" date="2010" name="J. Bacteriol.">
        <title>The genetic basis of laboratory adaptation in Caulobacter crescentus.</title>
        <authorList>
            <person name="Marks M.E."/>
            <person name="Castro-Rojas C.M."/>
            <person name="Teiling C."/>
            <person name="Du L."/>
            <person name="Kapatral V."/>
            <person name="Walunas T.L."/>
            <person name="Crosson S."/>
        </authorList>
    </citation>
    <scope>NUCLEOTIDE SEQUENCE [LARGE SCALE GENOMIC DNA]</scope>
    <source>
        <strain>NA1000 / CB15N</strain>
    </source>
</reference>
<sequence>MDLRYQTGFGSYFETEAHPGALPVGRNSPQKVPFGLYAEQLSGSAFTAPRHENRRTWLYRLRPSAGHEAYQPYAQDKLVSAFPGPATPNRLRWSPLEIPAAPTDFVDGLVSLAGNADAATLGGIAAHVYLVNVSMKNRVFYNADGEMLIVPQMGELTLVTEMGVLKAGPGHIAVIPRGVRFRVEVEGPARGYVCENYGAAFRLPELGPIGANGLANPRDFEAPVAAFEDIDTPTQVIQKFQGALWAATWDHSPLDVVAWHGNLTPYRYDLSRFNTINTVSYDHPDPSIFTVLTSPSDTPGTANCDFVIFPPRWMVAEDTFRPPWFHRNVMSEFMGLIHGAYDAKAGGFVPGGASLHNCMSDHGPDVASHKKATEVVLAPHKIDGTMAFMFESRWVFRPTHLALESAALQSDYDACWTGFPKARLS</sequence>
<protein>
    <recommendedName>
        <fullName evidence="1">Homogentisate 1,2-dioxygenase</fullName>
        <shortName evidence="1">HGDO</shortName>
        <ecNumber evidence="1">1.13.11.5</ecNumber>
    </recommendedName>
    <alternativeName>
        <fullName evidence="1">Homogentisate oxygenase</fullName>
    </alternativeName>
    <alternativeName>
        <fullName evidence="1">Homogentisic acid oxidase</fullName>
    </alternativeName>
    <alternativeName>
        <fullName evidence="1">Homogentisicase</fullName>
    </alternativeName>
</protein>
<gene>
    <name evidence="1" type="primary">hmgA</name>
    <name type="ordered locus">CCNA_02615</name>
</gene>
<accession>B8H072</accession>
<feature type="chain" id="PRO_1000190374" description="Homogentisate 1,2-dioxygenase">
    <location>
        <begin position="1"/>
        <end position="425"/>
    </location>
</feature>
<feature type="active site" description="Proton acceptor" evidence="1">
    <location>
        <position position="283"/>
    </location>
</feature>
<feature type="binding site" evidence="1">
    <location>
        <position position="326"/>
    </location>
    <ligand>
        <name>Fe cation</name>
        <dbReference type="ChEBI" id="CHEBI:24875"/>
    </ligand>
</feature>
<feature type="binding site" evidence="1">
    <location>
        <position position="332"/>
    </location>
    <ligand>
        <name>Fe cation</name>
        <dbReference type="ChEBI" id="CHEBI:24875"/>
    </ligand>
</feature>
<feature type="binding site" evidence="1">
    <location>
        <position position="341"/>
    </location>
    <ligand>
        <name>homogentisate</name>
        <dbReference type="ChEBI" id="CHEBI:16169"/>
    </ligand>
</feature>
<feature type="binding site" evidence="1">
    <location>
        <position position="362"/>
    </location>
    <ligand>
        <name>Fe cation</name>
        <dbReference type="ChEBI" id="CHEBI:24875"/>
    </ligand>
</feature>
<feature type="binding site" evidence="1">
    <location>
        <position position="362"/>
    </location>
    <ligand>
        <name>homogentisate</name>
        <dbReference type="ChEBI" id="CHEBI:16169"/>
    </ligand>
</feature>
<evidence type="ECO:0000255" key="1">
    <source>
        <dbReference type="HAMAP-Rule" id="MF_00334"/>
    </source>
</evidence>
<organism>
    <name type="scientific">Caulobacter vibrioides (strain NA1000 / CB15N)</name>
    <name type="common">Caulobacter crescentus</name>
    <dbReference type="NCBI Taxonomy" id="565050"/>
    <lineage>
        <taxon>Bacteria</taxon>
        <taxon>Pseudomonadati</taxon>
        <taxon>Pseudomonadota</taxon>
        <taxon>Alphaproteobacteria</taxon>
        <taxon>Caulobacterales</taxon>
        <taxon>Caulobacteraceae</taxon>
        <taxon>Caulobacter</taxon>
    </lineage>
</organism>
<comment type="function">
    <text evidence="1">Involved in the catabolism of homogentisate (2,5-dihydroxyphenylacetate or 2,5-OH-PhAc), a central intermediate in the degradation of phenylalanine and tyrosine. Catalyzes the oxidative ring cleavage of the aromatic ring of homogentisate to yield maleylacetoacetate.</text>
</comment>
<comment type="catalytic activity">
    <reaction evidence="1">
        <text>homogentisate + O2 = 4-maleylacetoacetate + H(+)</text>
        <dbReference type="Rhea" id="RHEA:15449"/>
        <dbReference type="ChEBI" id="CHEBI:15378"/>
        <dbReference type="ChEBI" id="CHEBI:15379"/>
        <dbReference type="ChEBI" id="CHEBI:16169"/>
        <dbReference type="ChEBI" id="CHEBI:17105"/>
        <dbReference type="EC" id="1.13.11.5"/>
    </reaction>
</comment>
<comment type="cofactor">
    <cofactor evidence="1">
        <name>Fe cation</name>
        <dbReference type="ChEBI" id="CHEBI:24875"/>
    </cofactor>
</comment>
<comment type="pathway">
    <text evidence="1">Amino-acid degradation; L-phenylalanine degradation; acetoacetate and fumarate from L-phenylalanine: step 4/6.</text>
</comment>
<comment type="subunit">
    <text evidence="1">Hexamer; dimer of trimers.</text>
</comment>
<comment type="similarity">
    <text evidence="1">Belongs to the homogentisate dioxygenase family.</text>
</comment>
<proteinExistence type="inferred from homology"/>
<name>HGD_CAUVN</name>
<dbReference type="EC" id="1.13.11.5" evidence="1"/>
<dbReference type="EMBL" id="CP001340">
    <property type="protein sequence ID" value="ACL96080.1"/>
    <property type="molecule type" value="Genomic_DNA"/>
</dbReference>
<dbReference type="RefSeq" id="WP_010920389.1">
    <property type="nucleotide sequence ID" value="NC_011916.1"/>
</dbReference>
<dbReference type="RefSeq" id="YP_002517988.1">
    <property type="nucleotide sequence ID" value="NC_011916.1"/>
</dbReference>
<dbReference type="SMR" id="B8H072"/>
<dbReference type="GeneID" id="7332965"/>
<dbReference type="KEGG" id="ccs:CCNA_02615"/>
<dbReference type="PATRIC" id="fig|565050.3.peg.2564"/>
<dbReference type="HOGENOM" id="CLU_027174_0_0_5"/>
<dbReference type="OrthoDB" id="9811253at2"/>
<dbReference type="PhylomeDB" id="B8H072"/>
<dbReference type="UniPathway" id="UPA00139">
    <property type="reaction ID" value="UER00339"/>
</dbReference>
<dbReference type="Proteomes" id="UP000001364">
    <property type="component" value="Chromosome"/>
</dbReference>
<dbReference type="GO" id="GO:0005737">
    <property type="term" value="C:cytoplasm"/>
    <property type="evidence" value="ECO:0007669"/>
    <property type="project" value="TreeGrafter"/>
</dbReference>
<dbReference type="GO" id="GO:0004411">
    <property type="term" value="F:homogentisate 1,2-dioxygenase activity"/>
    <property type="evidence" value="ECO:0007669"/>
    <property type="project" value="UniProtKB-UniRule"/>
</dbReference>
<dbReference type="GO" id="GO:0005506">
    <property type="term" value="F:iron ion binding"/>
    <property type="evidence" value="ECO:0007669"/>
    <property type="project" value="UniProtKB-UniRule"/>
</dbReference>
<dbReference type="GO" id="GO:0006559">
    <property type="term" value="P:L-phenylalanine catabolic process"/>
    <property type="evidence" value="ECO:0007669"/>
    <property type="project" value="UniProtKB-UniRule"/>
</dbReference>
<dbReference type="GO" id="GO:0006572">
    <property type="term" value="P:tyrosine catabolic process"/>
    <property type="evidence" value="ECO:0007669"/>
    <property type="project" value="UniProtKB-UniRule"/>
</dbReference>
<dbReference type="CDD" id="cd07000">
    <property type="entry name" value="cupin_HGO_N"/>
    <property type="match status" value="1"/>
</dbReference>
<dbReference type="FunFam" id="2.60.120.10:FF:000034">
    <property type="entry name" value="Homogentisate 1,2-dioxygenase"/>
    <property type="match status" value="1"/>
</dbReference>
<dbReference type="Gene3D" id="2.60.120.10">
    <property type="entry name" value="Jelly Rolls"/>
    <property type="match status" value="2"/>
</dbReference>
<dbReference type="HAMAP" id="MF_00334">
    <property type="entry name" value="Homogentis_dioxygen"/>
    <property type="match status" value="1"/>
</dbReference>
<dbReference type="InterPro" id="IPR046451">
    <property type="entry name" value="HgmA_C"/>
</dbReference>
<dbReference type="InterPro" id="IPR046452">
    <property type="entry name" value="HgmA_N"/>
</dbReference>
<dbReference type="InterPro" id="IPR005708">
    <property type="entry name" value="Homogentis_dOase"/>
</dbReference>
<dbReference type="InterPro" id="IPR022950">
    <property type="entry name" value="Homogentis_dOase_bac"/>
</dbReference>
<dbReference type="InterPro" id="IPR014710">
    <property type="entry name" value="RmlC-like_jellyroll"/>
</dbReference>
<dbReference type="InterPro" id="IPR011051">
    <property type="entry name" value="RmlC_Cupin_sf"/>
</dbReference>
<dbReference type="NCBIfam" id="TIGR01015">
    <property type="entry name" value="hmgA"/>
    <property type="match status" value="1"/>
</dbReference>
<dbReference type="PANTHER" id="PTHR11056">
    <property type="entry name" value="HOMOGENTISATE 1,2-DIOXYGENASE"/>
    <property type="match status" value="1"/>
</dbReference>
<dbReference type="PANTHER" id="PTHR11056:SF0">
    <property type="entry name" value="HOMOGENTISATE 1,2-DIOXYGENASE"/>
    <property type="match status" value="1"/>
</dbReference>
<dbReference type="Pfam" id="PF04209">
    <property type="entry name" value="HgmA_C"/>
    <property type="match status" value="1"/>
</dbReference>
<dbReference type="Pfam" id="PF20510">
    <property type="entry name" value="HgmA_N"/>
    <property type="match status" value="1"/>
</dbReference>
<dbReference type="SUPFAM" id="SSF51182">
    <property type="entry name" value="RmlC-like cupins"/>
    <property type="match status" value="1"/>
</dbReference>